<protein>
    <recommendedName>
        <fullName evidence="25">Collagen alpha-1(XVIII) chain</fullName>
    </recommendedName>
    <component>
        <recommendedName>
            <fullName evidence="25">Endostatin</fullName>
        </recommendedName>
    </component>
    <component>
        <recommendedName>
            <fullName evidence="25">Non-collagenous domain 1</fullName>
            <shortName>NC1</shortName>
        </recommendedName>
    </component>
</protein>
<feature type="signal peptide" evidence="3">
    <location>
        <begin position="1"/>
        <end position="23"/>
    </location>
</feature>
<feature type="chain" id="PRO_0000005793" description="Collagen alpha-1(XVIII) chain">
    <location>
        <begin position="24"/>
        <end position="1754"/>
    </location>
</feature>
<feature type="chain" id="PRO_0000005794" description="Endostatin">
    <location>
        <begin position="1572"/>
        <end position="1754"/>
    </location>
</feature>
<feature type="chain" id="PRO_0000441861" description="Non-collagenous domain 1">
    <location>
        <begin status="unknown"/>
        <end position="1754"/>
    </location>
</feature>
<feature type="domain" description="FZ" evidence="4">
    <location>
        <begin position="329"/>
        <end position="446"/>
    </location>
</feature>
<feature type="domain" description="Laminin G-like">
    <location>
        <begin position="456"/>
        <end position="644"/>
    </location>
</feature>
<feature type="region of interest" description="Disordered" evidence="5">
    <location>
        <begin position="42"/>
        <end position="104"/>
    </location>
</feature>
<feature type="region of interest" description="Disordered" evidence="5">
    <location>
        <begin position="152"/>
        <end position="256"/>
    </location>
</feature>
<feature type="region of interest" description="Disordered" evidence="5">
    <location>
        <begin position="645"/>
        <end position="1443"/>
    </location>
</feature>
<feature type="region of interest" description="Nonhelical region 1 (NC1)">
    <location>
        <begin position="645"/>
        <end position="751"/>
    </location>
</feature>
<feature type="region of interest" description="Triple-helical region 1 (COL1)">
    <location>
        <begin position="752"/>
        <end position="785"/>
    </location>
</feature>
<feature type="region of interest" description="Nonhelical region 2 (NC2)">
    <location>
        <begin position="786"/>
        <end position="795"/>
    </location>
</feature>
<feature type="region of interest" description="Triple-helical region 2 (COL2)">
    <location>
        <begin position="796"/>
        <end position="875"/>
    </location>
</feature>
<feature type="region of interest" description="Nonhelical region 3 (NC3)">
    <location>
        <begin position="876"/>
        <end position="899"/>
    </location>
</feature>
<feature type="region of interest" description="Triple-helical region 3 (COL3)">
    <location>
        <begin position="900"/>
        <end position="1021"/>
    </location>
</feature>
<feature type="region of interest" description="Nonhelical region 4 (NC4)">
    <location>
        <begin position="1022"/>
        <end position="1044"/>
    </location>
</feature>
<feature type="region of interest" description="Triple-helical region 4 (COL4)">
    <location>
        <begin position="1045"/>
        <end position="1127"/>
    </location>
</feature>
<feature type="region of interest" description="Nonhelical region 5 (NC5)">
    <location>
        <begin position="1128"/>
        <end position="1141"/>
    </location>
</feature>
<feature type="region of interest" description="Triple-helical region 5 (COL5)">
    <location>
        <begin position="1142"/>
        <end position="1183"/>
    </location>
</feature>
<feature type="region of interest" description="Nonhelical region 6 (NC6)">
    <location>
        <begin position="1184"/>
        <end position="1196"/>
    </location>
</feature>
<feature type="region of interest" description="Triple-helical region 6 (COL6)">
    <location>
        <begin position="1197"/>
        <end position="1269"/>
    </location>
</feature>
<feature type="region of interest" description="Nonhelical region 7 (NC7)">
    <location>
        <begin position="1270"/>
        <end position="1279"/>
    </location>
</feature>
<feature type="region of interest" description="Triple-helical region 7 (COL7)">
    <location>
        <begin position="1280"/>
        <end position="1312"/>
    </location>
</feature>
<feature type="region of interest" description="Nonhelical region 8 (NC8)">
    <location>
        <begin position="1313"/>
        <end position="1324"/>
    </location>
</feature>
<feature type="region of interest" description="Triple-helical region 8 (COL8)">
    <location>
        <begin position="1325"/>
        <end position="1346"/>
    </location>
</feature>
<feature type="region of interest" description="Nonhelical region 9 (NC9)">
    <location>
        <begin position="1347"/>
        <end position="1353"/>
    </location>
</feature>
<feature type="region of interest" description="Triple-helical region 9 (COL9)">
    <location>
        <begin position="1354"/>
        <end position="1411"/>
    </location>
</feature>
<feature type="region of interest" description="Nonhelical region 10 (NC10)">
    <location>
        <begin position="1412"/>
        <end position="1424"/>
    </location>
</feature>
<feature type="region of interest" description="Triple-helical region 10 (COL10)">
    <location>
        <begin position="1425"/>
        <end position="1442"/>
    </location>
</feature>
<feature type="region of interest" description="Nonhelical region 11 (NC11)">
    <location>
        <begin position="1443"/>
        <end position="1754"/>
    </location>
</feature>
<feature type="region of interest" description="Non-collagenous domain 1 association domain" evidence="2">
    <location>
        <begin position="1456"/>
        <end position="1501"/>
    </location>
</feature>
<feature type="region of interest" description="Non-collagenous domain 1 hinge region" evidence="2">
    <location>
        <begin position="1502"/>
        <end position="1571"/>
    </location>
</feature>
<feature type="region of interest" description="Disordered" evidence="5">
    <location>
        <begin position="1511"/>
        <end position="1556"/>
    </location>
</feature>
<feature type="short sequence motif" description="Cell attachment site" evidence="3">
    <location>
        <begin position="1330"/>
        <end position="1332"/>
    </location>
</feature>
<feature type="compositionally biased region" description="Polar residues" evidence="5">
    <location>
        <begin position="57"/>
        <end position="73"/>
    </location>
</feature>
<feature type="compositionally biased region" description="Polar residues" evidence="5">
    <location>
        <begin position="157"/>
        <end position="169"/>
    </location>
</feature>
<feature type="compositionally biased region" description="Low complexity" evidence="5">
    <location>
        <begin position="215"/>
        <end position="253"/>
    </location>
</feature>
<feature type="compositionally biased region" description="Basic and acidic residues" evidence="5">
    <location>
        <begin position="672"/>
        <end position="681"/>
    </location>
</feature>
<feature type="compositionally biased region" description="Polar residues" evidence="5">
    <location>
        <begin position="717"/>
        <end position="738"/>
    </location>
</feature>
<feature type="compositionally biased region" description="Pro residues" evidence="5">
    <location>
        <begin position="762"/>
        <end position="789"/>
    </location>
</feature>
<feature type="compositionally biased region" description="Basic and acidic residues" evidence="5">
    <location>
        <begin position="815"/>
        <end position="831"/>
    </location>
</feature>
<feature type="compositionally biased region" description="Low complexity" evidence="5">
    <location>
        <begin position="833"/>
        <end position="846"/>
    </location>
</feature>
<feature type="compositionally biased region" description="Pro residues" evidence="5">
    <location>
        <begin position="862"/>
        <end position="874"/>
    </location>
</feature>
<feature type="compositionally biased region" description="Pro residues" evidence="5">
    <location>
        <begin position="904"/>
        <end position="914"/>
    </location>
</feature>
<feature type="compositionally biased region" description="Low complexity" evidence="5">
    <location>
        <begin position="930"/>
        <end position="942"/>
    </location>
</feature>
<feature type="compositionally biased region" description="Pro residues" evidence="5">
    <location>
        <begin position="946"/>
        <end position="961"/>
    </location>
</feature>
<feature type="compositionally biased region" description="Low complexity" evidence="5">
    <location>
        <begin position="976"/>
        <end position="1003"/>
    </location>
</feature>
<feature type="compositionally biased region" description="Pro residues" evidence="5">
    <location>
        <begin position="1005"/>
        <end position="1021"/>
    </location>
</feature>
<feature type="compositionally biased region" description="Low complexity" evidence="5">
    <location>
        <begin position="1053"/>
        <end position="1065"/>
    </location>
</feature>
<feature type="compositionally biased region" description="Basic and acidic residues" evidence="5">
    <location>
        <begin position="1095"/>
        <end position="1109"/>
    </location>
</feature>
<feature type="compositionally biased region" description="Pro residues" evidence="5">
    <location>
        <begin position="1117"/>
        <end position="1126"/>
    </location>
</feature>
<feature type="compositionally biased region" description="Low complexity" evidence="5">
    <location>
        <begin position="1141"/>
        <end position="1153"/>
    </location>
</feature>
<feature type="compositionally biased region" description="Pro residues" evidence="5">
    <location>
        <begin position="1254"/>
        <end position="1268"/>
    </location>
</feature>
<feature type="compositionally biased region" description="Pro residues" evidence="5">
    <location>
        <begin position="1282"/>
        <end position="1296"/>
    </location>
</feature>
<feature type="compositionally biased region" description="Basic and acidic residues" evidence="5">
    <location>
        <begin position="1321"/>
        <end position="1341"/>
    </location>
</feature>
<feature type="compositionally biased region" description="Pro residues" evidence="5">
    <location>
        <begin position="1353"/>
        <end position="1365"/>
    </location>
</feature>
<feature type="compositionally biased region" description="Pro residues" evidence="5">
    <location>
        <begin position="1401"/>
        <end position="1414"/>
    </location>
</feature>
<feature type="compositionally biased region" description="Pro residues" evidence="5">
    <location>
        <begin position="1424"/>
        <end position="1436"/>
    </location>
</feature>
<feature type="compositionally biased region" description="Basic and acidic residues" evidence="5">
    <location>
        <begin position="1519"/>
        <end position="1535"/>
    </location>
</feature>
<feature type="compositionally biased region" description="Pro residues" evidence="5">
    <location>
        <begin position="1541"/>
        <end position="1551"/>
    </location>
</feature>
<feature type="binding site">
    <location>
        <position position="1572"/>
    </location>
    <ligand>
        <name>Zn(2+)</name>
        <dbReference type="ChEBI" id="CHEBI:29105"/>
    </ligand>
</feature>
<feature type="binding site">
    <location>
        <position position="1574"/>
    </location>
    <ligand>
        <name>Zn(2+)</name>
        <dbReference type="ChEBI" id="CHEBI:29105"/>
    </ligand>
</feature>
<feature type="binding site">
    <location>
        <position position="1582"/>
    </location>
    <ligand>
        <name>Zn(2+)</name>
        <dbReference type="ChEBI" id="CHEBI:29105"/>
    </ligand>
</feature>
<feature type="binding site">
    <location>
        <position position="1647"/>
    </location>
    <ligand>
        <name>Zn(2+)</name>
        <dbReference type="ChEBI" id="CHEBI:29105"/>
    </ligand>
</feature>
<feature type="modified residue" description="Phosphothreonine" evidence="27">
    <location>
        <position position="696"/>
    </location>
</feature>
<feature type="glycosylation site" description="N-linked (GlcNAc...) asparagine" evidence="3">
    <location>
        <position position="68"/>
    </location>
</feature>
<feature type="glycosylation site" description="N-linked (GlcNAc...) asparagine" evidence="3">
    <location>
        <position position="129"/>
    </location>
</feature>
<feature type="glycosylation site" description="N-linked (GlcNAc...) asparagine" evidence="3">
    <location>
        <position position="164"/>
    </location>
</feature>
<feature type="glycosylation site" description="O-linked (Xyl...) (chondroitin sulfate) serine" evidence="18">
    <location>
        <position position="889"/>
    </location>
</feature>
<feature type="glycosylation site" description="N-linked (GlcNAc...) asparagine" evidence="3">
    <location>
        <position position="926"/>
    </location>
</feature>
<feature type="glycosylation site" id="CAR_000150" description="O-linked (GalNAc...) threonine" evidence="6">
    <location>
        <position position="1567"/>
    </location>
</feature>
<feature type="disulfide bond" evidence="4">
    <location>
        <begin position="334"/>
        <end position="397"/>
    </location>
</feature>
<feature type="disulfide bond" evidence="4">
    <location>
        <begin position="344"/>
        <end position="390"/>
    </location>
</feature>
<feature type="disulfide bond" evidence="4">
    <location>
        <begin position="381"/>
        <end position="419"/>
    </location>
</feature>
<feature type="disulfide bond" evidence="4">
    <location>
        <begin position="408"/>
        <end position="443"/>
    </location>
</feature>
<feature type="disulfide bond" evidence="4">
    <location>
        <begin position="412"/>
        <end position="432"/>
    </location>
</feature>
<feature type="disulfide bond" evidence="4">
    <location>
        <begin position="1604"/>
        <end position="1744"/>
    </location>
</feature>
<feature type="disulfide bond" evidence="4">
    <location>
        <begin position="1706"/>
        <end position="1736"/>
    </location>
</feature>
<feature type="splice variant" id="VSP_023130" description="In isoform 3." evidence="23 24">
    <location>
        <begin position="1"/>
        <end position="415"/>
    </location>
</feature>
<feature type="splice variant" id="VSP_023131" description="In isoform 2." evidence="24">
    <location>
        <begin position="216"/>
        <end position="450"/>
    </location>
</feature>
<feature type="splice variant" id="VSP_023132" description="In isoform 3." evidence="23 24">
    <original>QDACWSRLGGGRLPVACASLPTQEDGYCVLIGPAA</original>
    <variation>MAPRCPWPWPRRRRLLDVLAPLVLLLGVRAASAEP</variation>
    <location>
        <begin position="416"/>
        <end position="450"/>
    </location>
</feature>
<feature type="sequence variant" id="VAR_018053" description="In dbSNP:rs61735029." evidence="12">
    <original>Q</original>
    <variation>L</variation>
    <location>
        <position position="49"/>
    </location>
</feature>
<feature type="sequence variant" id="VAR_018054" description="In dbSNP:rs114139997." evidence="12">
    <original>G</original>
    <variation>R</variation>
    <location>
        <position position="111"/>
    </location>
</feature>
<feature type="sequence variant" id="VAR_084282" description="In GLCC; uncertain significance; dbSNP:rs749957649." evidence="17">
    <original>E</original>
    <variation>K</variation>
    <location>
        <position position="184"/>
    </location>
</feature>
<feature type="sequence variant" id="VAR_059232" description="In dbSNP:rs11702494.">
    <original>A</original>
    <variation>T</variation>
    <location>
        <position position="288"/>
    </location>
</feature>
<feature type="sequence variant" id="VAR_061115" description="In dbSNP:rs8133886.">
    <original>T</original>
    <variation>M</variation>
    <location>
        <position position="379"/>
    </location>
</feature>
<feature type="sequence variant" id="VAR_018055" description="In dbSNP:rs62000962." evidence="10 11 12 13 21">
    <original>V</original>
    <variation>I</variation>
    <location>
        <position position="1076"/>
    </location>
</feature>
<feature type="sequence variant" id="VAR_018056" description="In dbSNP:rs79980197." evidence="12 15 19">
    <original>P</original>
    <variation>R</variation>
    <location>
        <position position="1121"/>
    </location>
</feature>
<feature type="sequence variant" id="VAR_059233" description="In dbSNP:rs2230693.">
    <original>Q</original>
    <variation>H</variation>
    <location>
        <position position="1195"/>
    </location>
</feature>
<feature type="sequence variant" id="VAR_012709" description="Probable risk factor for prostate cancer; results in decreased affinity for laminin; dbSNP:rs12483377." evidence="10 11 12 22">
    <original>D</original>
    <variation>N</variation>
    <location>
        <position position="1675"/>
    </location>
</feature>
<feature type="sequence conflict" description="In Ref. 2; AAR83296." evidence="25" ref="2">
    <original>R</original>
    <variation>K</variation>
    <location>
        <position position="299"/>
    </location>
</feature>
<feature type="sequence conflict" description="In Ref. 1; AAC39658/AAC39659." evidence="25" ref="1">
    <original>S</original>
    <variation>F</variation>
    <location>
        <position position="663"/>
    </location>
</feature>
<feature type="sequence conflict" description="In Ref. 5; AAA51864." evidence="25" ref="5">
    <original>V</original>
    <variation>L</variation>
    <location>
        <position position="1112"/>
    </location>
</feature>
<feature type="sequence conflict" description="In Ref. 5; AAA51864." evidence="25" ref="5">
    <original>P</original>
    <variation>R</variation>
    <location>
        <position position="1147"/>
    </location>
</feature>
<feature type="sequence conflict" description="In Ref. 5; AAA51864." evidence="25" ref="5">
    <original>R</original>
    <variation>L</variation>
    <location>
        <position position="1168"/>
    </location>
</feature>
<feature type="sequence conflict" description="In Ref. 5; AAA51864." evidence="25" ref="5">
    <original>P</original>
    <variation>L</variation>
    <location>
        <position position="1210"/>
    </location>
</feature>
<feature type="sequence conflict" description="In Ref. 5; AAA51864." evidence="25" ref="5">
    <original>A</original>
    <variation>P</variation>
    <location>
        <position position="1299"/>
    </location>
</feature>
<feature type="sequence conflict" description="In Ref. 5; AAA51864." evidence="25" ref="5">
    <original>L</original>
    <variation>K</variation>
    <location>
        <position position="1319"/>
    </location>
</feature>
<feature type="sequence conflict" description="In Ref. 5; AAA51864." evidence="25" ref="5">
    <original>P</original>
    <variation>A</variation>
    <location>
        <position position="1355"/>
    </location>
</feature>
<feature type="sequence conflict" description="In Ref. 5; AAA51864." evidence="25" ref="5">
    <original>P</original>
    <variation>A</variation>
    <location>
        <position position="1358"/>
    </location>
</feature>
<feature type="sequence conflict" description="In Ref. 1; AAC39658/AAC39659, 2; AAR83296/AAR83297/AAR83298, 4; AAH33715/AAH63833 and 5; AAA51864." evidence="25" ref="1 2 4 5">
    <location>
        <begin position="1362"/>
        <end position="1364"/>
    </location>
</feature>
<feature type="sequence conflict" description="In Ref. 5; AAA51864." evidence="25" ref="5">
    <original>G</original>
    <variation>GQ</variation>
    <location>
        <position position="1444"/>
    </location>
</feature>
<feature type="sequence conflict" description="In Ref. 5; AAA51864." evidence="25" ref="5">
    <original>R</original>
    <variation>G</variation>
    <location>
        <position position="1542"/>
    </location>
</feature>
<feature type="sequence conflict" description="In Ref. 5; AAA51864." evidence="25" ref="5">
    <original>A</original>
    <variation>G</variation>
    <location>
        <position position="1552"/>
    </location>
</feature>
<feature type="sequence conflict" description="In Ref. 5; AAA51864." evidence="25" ref="5">
    <original>LR</original>
    <variation>CG</variation>
    <location>
        <begin position="1561"/>
        <end position="1562"/>
    </location>
</feature>
<feature type="sequence conflict" description="In Ref. 7; AAF01310." evidence="25" ref="7">
    <original>R</original>
    <variation>T</variation>
    <location>
        <position position="1681"/>
    </location>
</feature>
<feature type="sequence conflict" description="In Ref. 8; AAK50626." evidence="25" ref="8">
    <original>W</original>
    <variation>R</variation>
    <location>
        <position position="1685"/>
    </location>
</feature>
<feature type="sequence conflict" description="In Ref. 7; AAF01310." evidence="25" ref="7">
    <original>S</original>
    <variation>Y</variation>
    <location>
        <position position="1721"/>
    </location>
</feature>
<feature type="sequence conflict" description="In Ref. 8; AAK50626." evidence="25" ref="8">
    <original>C</original>
    <variation>S</variation>
    <location>
        <position position="1736"/>
    </location>
</feature>
<feature type="strand" evidence="29">
    <location>
        <begin position="1445"/>
        <end position="1450"/>
    </location>
</feature>
<feature type="helix" evidence="29">
    <location>
        <begin position="1451"/>
        <end position="1457"/>
    </location>
</feature>
<feature type="helix" evidence="29">
    <location>
        <begin position="1458"/>
        <end position="1460"/>
    </location>
</feature>
<feature type="strand" evidence="29">
    <location>
        <begin position="1466"/>
        <end position="1469"/>
    </location>
</feature>
<feature type="turn" evidence="29">
    <location>
        <begin position="1470"/>
        <end position="1473"/>
    </location>
</feature>
<feature type="strand" evidence="29">
    <location>
        <begin position="1474"/>
        <end position="1479"/>
    </location>
</feature>
<feature type="strand" evidence="29">
    <location>
        <begin position="1482"/>
        <end position="1486"/>
    </location>
</feature>
<feature type="strand" evidence="29">
    <location>
        <begin position="1488"/>
        <end position="1493"/>
    </location>
</feature>
<feature type="strand" evidence="28">
    <location>
        <begin position="1581"/>
        <end position="1585"/>
    </location>
</feature>
<feature type="helix" evidence="28">
    <location>
        <begin position="1597"/>
        <end position="1610"/>
    </location>
</feature>
<feature type="strand" evidence="28">
    <location>
        <begin position="1617"/>
        <end position="1621"/>
    </location>
</feature>
<feature type="helix" evidence="28">
    <location>
        <begin position="1629"/>
        <end position="1631"/>
    </location>
</feature>
<feature type="helix" evidence="28">
    <location>
        <begin position="1634"/>
        <end position="1636"/>
    </location>
</feature>
<feature type="strand" evidence="28">
    <location>
        <begin position="1649"/>
        <end position="1652"/>
    </location>
</feature>
<feature type="helix" evidence="28">
    <location>
        <begin position="1654"/>
        <end position="1657"/>
    </location>
</feature>
<feature type="helix" evidence="28">
    <location>
        <begin position="1679"/>
        <end position="1681"/>
    </location>
</feature>
<feature type="strand" evidence="28">
    <location>
        <begin position="1689"/>
        <end position="1691"/>
    </location>
</feature>
<feature type="helix" evidence="28">
    <location>
        <begin position="1706"/>
        <end position="1709"/>
    </location>
</feature>
<feature type="strand" evidence="28">
    <location>
        <begin position="1716"/>
        <end position="1722"/>
    </location>
</feature>
<feature type="helix" evidence="28">
    <location>
        <begin position="1723"/>
        <end position="1725"/>
    </location>
</feature>
<feature type="strand" evidence="28">
    <location>
        <begin position="1727"/>
        <end position="1729"/>
    </location>
</feature>
<feature type="strand" evidence="28">
    <location>
        <begin position="1732"/>
        <end position="1735"/>
    </location>
</feature>
<feature type="strand" evidence="28">
    <location>
        <begin position="1743"/>
        <end position="1747"/>
    </location>
</feature>
<gene>
    <name evidence="26" type="primary">COL18A1</name>
</gene>
<sequence>MAPYPCGCHILLLLFCCLAAARANLLNLNWLWFNNEDTSHAATTIPEPQGPLPVQPTADTTTHVTPRNGSTEPATAPGSPEPPSELLEDGQDTPTSAESPDAPEENIAGVGAEILNVAKGIRSFVQLWNDTVPTESLARAETLVLETPVGPLALAGPSSTPQENGTTLWPSRGIPSSPGAHTTEAGTLPAPTPSPPSLGRPWAPLTGPSVPPPSSGRASLSSLLGGAPPWGSLQDPDSQGLSPAAAAPSQQLQRPDVRLRTPLLHPLVMGSLGKHAAPSAFSSGLPGALSQVAVTTLTRDSGAWVSHVANSVGPGLANNSALLGADPEAPAGRCLPLPPSLPVCGHLGISRFWLPNHLHHESGEQVRAGARAWGGLLQTHCHPFLAWFFCLLLVPPCGSVPPPAPPPCCQFCEALQDACWSRLGGGRLPVACASLPTQEDGYCVLIGPAAERISEEVGLLQLLGDPPPQQVTQTDDPDVGLAYVFGPDANSGQVARYHFPSLFFRDFSLLFHIRPATEGPGVLFAITDSAQAMVLLGVKLSGVQDGHQDISLLYTEPGAGQTHTAASFRLPAFVGQWTHLALSVAGGFVALYVDCEEFQRMPLARSSRGLELEPGAGLFVAQAGGADPDKFQGVIAELKVRRDPQVSPMHCLDEEGDDSDGASGDSGSGLGDARELLREETGAALKPRLPAPPPVTTPPLAGGSSTEDSRSEEVEEQTTVASLGAQTLPGSDSVSTWDGSVRTPGGRVKEGGLKGQKGEPGVPGPPGRAGPPGSPCLPGPPGLPCPVSPLGPAGPALQTVPGPQGPPGPPGRDGTPGRDGEPGDPGEDGKPGDTGPQGFPGTPGDVGPKGDKGDPGVGERGPPGPQGPPGPPGPSFRHDKLTFIDMEGSGFGGDLEALRGPRGFPGPPGPPGVPGLPGEPGRFGVNSSDVPGPAGLPGVPGREGPPGFPGLPGPPGPPGREGPPGRTGQKGSLGEAGAPGHKGSKGAPGPAGARGESGLAGAPGPAGPPGPPGPPGPPGPGLPAGFDDMEGSGGPFWSTARSADGPQGPPGLPGLKGDPGVPGLPGAKGEVGADGVPGFPGLPGREGIAGPQGPKGDRGSRGEKGDPGKDGVGQPGLPGPPGPPGPVVYVSEQDGSVLSVPGPEGRPGFAGFPGPAGPKGNLGSKGERGSPGPKGEKGEPGSIFSPDGGALGPAQKGAKGEPGFRGPPGPYGRPGYKGEIGFPGRPGRPGMNGLKGEKGEPGDASLGFGMRGMPGPPGPPGPPGPPGTPVYDSNVFAESSRPGPPGLPGNQGPPGPKGAKGEVGPPGPPGQFPFDFLQLEAEMKGEKGDRGDAGQKGERGEPGGGGFFGSSLPGPPGPPGPPGPRGYPGIPGPKGESIRGQPGPPGPQGPPGIGYEGRQGPPGPPGPPGPPSFPGPHRQTISVPGPPGPPGPPGPPGTMGASSGVRLWATRQAMLGQVHEVPEGWLIFVAEQEELYVRVQNGFRKVQLEARTPLPRGTDNEVAALQPPVVQLHDSNPYPRREHPHPTARPWRADDILASPPRLPEPQPYPGAPHHSSYVHLRPARPTSPPAHSHRDFQPVLHLVALNSPLSGGMRGIRGADFQCFQQARAVGLAGTFRAFLSSRLQDLYSIVRRADRAAVPIVNLKDELLFPSWEALFSGSEGPLKPGARIFSFDGKDVLRHPTWPQKSVWHGSDPNGRRLTESYCETWRTEAPSATGQASSLLGGRLLGQSAASCHHAYIVLCIENSFMTASK</sequence>
<name>COIA1_HUMAN</name>
<proteinExistence type="evidence at protein level"/>
<organism>
    <name type="scientific">Homo sapiens</name>
    <name type="common">Human</name>
    <dbReference type="NCBI Taxonomy" id="9606"/>
    <lineage>
        <taxon>Eukaryota</taxon>
        <taxon>Metazoa</taxon>
        <taxon>Chordata</taxon>
        <taxon>Craniata</taxon>
        <taxon>Vertebrata</taxon>
        <taxon>Euteleostomi</taxon>
        <taxon>Mammalia</taxon>
        <taxon>Eutheria</taxon>
        <taxon>Euarchontoglires</taxon>
        <taxon>Primates</taxon>
        <taxon>Haplorrhini</taxon>
        <taxon>Catarrhini</taxon>
        <taxon>Hominidae</taxon>
        <taxon>Homo</taxon>
    </lineage>
</organism>
<evidence type="ECO:0000250" key="1"/>
<evidence type="ECO:0000250" key="2">
    <source>
        <dbReference type="UniProtKB" id="P39061"/>
    </source>
</evidence>
<evidence type="ECO:0000255" key="3"/>
<evidence type="ECO:0000255" key="4">
    <source>
        <dbReference type="PROSITE-ProRule" id="PRU00090"/>
    </source>
</evidence>
<evidence type="ECO:0000256" key="5">
    <source>
        <dbReference type="SAM" id="MobiDB-lite"/>
    </source>
</evidence>
<evidence type="ECO:0000269" key="6">
    <source>
    </source>
</evidence>
<evidence type="ECO:0000269" key="7">
    <source>
    </source>
</evidence>
<evidence type="ECO:0000269" key="8">
    <source>
    </source>
</evidence>
<evidence type="ECO:0000269" key="9">
    <source>
    </source>
</evidence>
<evidence type="ECO:0000269" key="10">
    <source>
    </source>
</evidence>
<evidence type="ECO:0000269" key="11">
    <source>
    </source>
</evidence>
<evidence type="ECO:0000269" key="12">
    <source>
    </source>
</evidence>
<evidence type="ECO:0000269" key="13">
    <source>
    </source>
</evidence>
<evidence type="ECO:0000269" key="14">
    <source>
    </source>
</evidence>
<evidence type="ECO:0000269" key="15">
    <source>
    </source>
</evidence>
<evidence type="ECO:0000269" key="16">
    <source>
    </source>
</evidence>
<evidence type="ECO:0000269" key="17">
    <source>
    </source>
</evidence>
<evidence type="ECO:0000269" key="18">
    <source>
    </source>
</evidence>
<evidence type="ECO:0000269" key="19">
    <source>
    </source>
</evidence>
<evidence type="ECO:0000269" key="20">
    <source>
    </source>
</evidence>
<evidence type="ECO:0000269" key="21">
    <source>
    </source>
</evidence>
<evidence type="ECO:0000269" key="22">
    <source ref="7"/>
</evidence>
<evidence type="ECO:0000303" key="23">
    <source>
    </source>
</evidence>
<evidence type="ECO:0000303" key="24">
    <source>
    </source>
</evidence>
<evidence type="ECO:0000305" key="25"/>
<evidence type="ECO:0000312" key="26">
    <source>
        <dbReference type="HGNC" id="HGNC:2195"/>
    </source>
</evidence>
<evidence type="ECO:0007744" key="27">
    <source>
    </source>
</evidence>
<evidence type="ECO:0007829" key="28">
    <source>
        <dbReference type="PDB" id="1BNL"/>
    </source>
</evidence>
<evidence type="ECO:0007829" key="29">
    <source>
        <dbReference type="PDB" id="3HSH"/>
    </source>
</evidence>
<comment type="function">
    <text evidence="8">Probably plays a major role in determining the retinal structure as well as in the closure of the neural tube.</text>
</comment>
<comment type="function">
    <molecule>Non-collagenous domain 1</molecule>
    <text evidence="9">May regulate extracellular matrix-dependent motility and morphogenesis of endothelial and non-endothelial cells; the function requires homotrimerization and implicates MAPK signaling.</text>
</comment>
<comment type="function">
    <molecule>Endostatin</molecule>
    <text evidence="2 9 20">Potently inhibits endothelial cell proliferation and angiogenesis (PubMed:9459295). May inhibit angiogenesis by binding to the heparan sulfate proteoglycans involved in growth factor signaling (By similarity). Inhibits VEGFA-induced endothelial cell proliferation and migration. Seems to inhibit VEGFA-mediated signaling by blocking the interaction of VEGFA to its receptor KDR/VEGFR2. Modulates endothelial cell migration in an integrin-dependent manner implicating integrin ITGA5:ITGB1 and to a lesser extent ITGAV:ITGB3 and ITGAV:ITGB5 (By similarity). May negatively regulate the activity of homotrimeric non-collagenous domain 1 (PubMed:11257123).</text>
</comment>
<comment type="subunit">
    <molecule>Non-collagenous domain 1</molecule>
    <text evidence="2 9">Forms homotrimers (PubMed:11257123). Recombinant non-collagenous domain 1 has stronger affinity to NID1, HSPG2 and laminin-1:NID1 complex and lower affinity to FBLN1 and FBLN2 than endostatin (By similarity).</text>
</comment>
<comment type="subunit">
    <molecule>Endostatin</molecule>
    <text evidence="2 9">Monomeric (PubMed:11257123). Interacts with KDR/VEGFR2. Interacts with the ITGA5:ITGB1 complex. Interacts with NID1, HSPG2, laminin-1:NID1 complex, FBLN1 and FBLN2 (By similarity).</text>
</comment>
<comment type="interaction">
    <interactant intactId="EBI-2566375">
        <id>PRO_0000005794</id>
    </interactant>
    <interactant intactId="EBI-821758">
        <id>PRO_0000000092</id>
        <label>APP</label>
        <dbReference type="UniProtKB" id="P05067"/>
    </interactant>
    <organismsDiffer>false</organismsDiffer>
    <experiments>2</experiments>
</comment>
<comment type="interaction">
    <interactant intactId="EBI-2566375">
        <id>PRO_0000005794</id>
    </interactant>
    <interactant intactId="EBI-2566375">
        <id>PRO_0000005794</id>
        <label>COL18A1</label>
        <dbReference type="UniProtKB" id="P39060"/>
    </interactant>
    <organismsDiffer>false</organismsDiffer>
    <experiments>6</experiments>
</comment>
<comment type="interaction">
    <interactant intactId="EBI-2566375">
        <id>PRO_0000005794</id>
    </interactant>
    <interactant intactId="EBI-346967">
        <id>P19338</id>
        <label>NCL</label>
    </interactant>
    <organismsDiffer>false</organismsDiffer>
    <experiments>12</experiments>
</comment>
<comment type="interaction">
    <interactant intactId="EBI-2566375">
        <id>PRO_0000005794</id>
    </interactant>
    <interactant intactId="EBI-8869614">
        <id>Q15113</id>
        <label>PCOLCE</label>
    </interactant>
    <organismsDiffer>false</organismsDiffer>
    <experiments>4</experiments>
</comment>
<comment type="interaction">
    <interactant intactId="EBI-2566375">
        <id>PRO_0000005794</id>
    </interactant>
    <interactant intactId="EBI-727668">
        <id>P21980</id>
        <label>TGM2</label>
    </interactant>
    <organismsDiffer>false</organismsDiffer>
    <experiments>2</experiments>
</comment>
<comment type="subcellular location">
    <subcellularLocation>
        <location evidence="1">Secreted</location>
        <location evidence="1">Extracellular space</location>
        <location evidence="1">Extracellular matrix</location>
    </subcellularLocation>
    <subcellularLocation>
        <location evidence="2">Secreted</location>
        <location evidence="2">Extracellular space</location>
        <location evidence="2">Extracellular matrix</location>
        <location evidence="2">Basement membrane</location>
    </subcellularLocation>
</comment>
<comment type="subcellular location">
    <molecule>Non-collagenous domain 1</molecule>
    <subcellularLocation>
        <location evidence="2">Secreted</location>
        <location evidence="2">Extracellular space</location>
        <location evidence="2">Extracellular matrix</location>
        <location evidence="2">Basement membrane</location>
    </subcellularLocation>
    <subcellularLocation>
        <location evidence="2">Secreted</location>
    </subcellularLocation>
</comment>
<comment type="subcellular location">
    <molecule>Endostatin</molecule>
    <subcellularLocation>
        <location evidence="6">Secreted</location>
    </subcellularLocation>
    <subcellularLocation>
        <location evidence="25">Secreted</location>
        <location evidence="25">Extracellular space</location>
        <location evidence="25">Extracellular matrix</location>
        <location evidence="25">Basement membrane</location>
    </subcellularLocation>
</comment>
<comment type="alternative products">
    <event type="alternative promoter"/>
    <event type="alternative splicing"/>
    <isoform>
        <id>P39060-3</id>
        <name>1</name>
        <name>NC1-728</name>
        <sequence type="displayed"/>
    </isoform>
    <isoform>
        <id>P39060-1</id>
        <name>2</name>
        <name>Long</name>
        <name>NC-493</name>
        <sequence type="described" ref="VSP_023131"/>
    </isoform>
    <isoform>
        <id>P39060-2</id>
        <name>3</name>
        <name>Short</name>
        <name>NC1-303</name>
        <sequence type="described" ref="VSP_023130 VSP_023132"/>
    </isoform>
</comment>
<comment type="tissue specificity">
    <text evidence="18">Detected in placenta (at protein level) (PubMed:32337544). Present in multiple organs with highest levels in liver, lung and kidney.</text>
</comment>
<comment type="PTM">
    <text>Prolines at the third position of the tripeptide repeating unit (G-X-Y) of the triple-helical regions are hydroxylated.</text>
</comment>
<comment type="PTM">
    <text evidence="6">Circulating endostatins are found as sialoglycoprotein and asialoglycoprotein structures.</text>
</comment>
<comment type="PTM">
    <text evidence="2 7">Undergoes proteolytic processing by CTSL/cathepsin-L and elastase-like proteases to generate both non-collagenous domain 1 trimers and endostatin monomers (PubMed:10626789). In tissue extracts (brain, skeletal muscle, heart, kidney, testis and liver) predominantly bands of approximately 38 kDa are detected; recombinant non-collagenous domain 1 shows similar mobility. In vitro, several proteolytic cleavage sites in the non-collagenous domain 1 hinge region generating different endostatin-like peptides are reported (By similarity).</text>
</comment>
<comment type="polymorphism">
    <text>There is an association between a polymorphism in position 1675 and prostate cancer. Heterozygous Asn-1675 individuals have a 2.5 times increased chance of developing prostate cancer as compared with homozygous Asp-1675 individuals.</text>
</comment>
<comment type="disease" evidence="8 16">
    <disease id="DI-01868">
        <name>Knobloch syndrome 1</name>
        <acronym>KNO1</acronym>
        <description>A developmental disorder primarily characterized by typical eye abnormalities, including high myopia, cataracts, dislocated lens, vitreoretinal degeneration, and retinal detachment, with occipital skull defects, which can range from occipital encephalocele to occult cutis aplasia.</description>
        <dbReference type="MIM" id="267750"/>
    </disease>
    <text>The disease is caused by variants affecting the gene represented in this entry.</text>
</comment>
<comment type="disease" evidence="17">
    <disease id="DI-05838">
        <name>Glaucoma, primary closed-angle</name>
        <acronym>GLCC</acronym>
        <description>An autosomal dominant form of primary glaucoma, an ocular disease characterized by a marked increase of intraocular pressure causing damage to eye structures and function. GLCC is characterized by elevated intraocular pressure due to iridocorneal angle closure with retention of the aqueous humor in the anterior chamber. Iridocorneal angle changes are apparent in the fourth to fifth decade of life, and patients manifest age-related variation in the severity of glaucomatous damage.</description>
        <dbReference type="MIM" id="618880"/>
    </disease>
    <text>The disease may be caused by variants affecting the gene represented in this entry.</text>
</comment>
<comment type="biotechnology">
    <molecule>Endostatin</molecule>
    <text evidence="14 25">Available under the name Endostar (Jiangsu Simcere Pharmaceutical) for the treatment of non-small-cell lung cancer.</text>
</comment>
<comment type="miscellaneous">
    <molecule>Isoform 1</molecule>
    <text>Produced by alternative promoter usage.</text>
</comment>
<comment type="miscellaneous">
    <molecule>Isoform 2</molecule>
    <text evidence="25">Produced by alternative splicing of isoform 1.</text>
</comment>
<comment type="miscellaneous">
    <molecule>Isoform 3</molecule>
    <text evidence="25">Produced by alternative promoter usage.</text>
</comment>
<comment type="similarity">
    <text evidence="25">Belongs to the multiplexin collagen family.</text>
</comment>
<comment type="caution">
    <text evidence="25">Non-collagenous domain 1 seems to be the predominant tissue form from which endostatin is cleaved. However, the proteolytic cleavage site to generate non-collagenous domain 1 is not known. Soluble recombinant non-collagenous domain 1 amenable to biochemical studies has been used instead.</text>
</comment>
<dbReference type="EMBL" id="AF018081">
    <property type="protein sequence ID" value="AAC39658.1"/>
    <property type="molecule type" value="mRNA"/>
</dbReference>
<dbReference type="EMBL" id="AF018082">
    <property type="protein sequence ID" value="AAC39659.1"/>
    <property type="molecule type" value="mRNA"/>
</dbReference>
<dbReference type="EMBL" id="AY484971">
    <property type="protein sequence ID" value="AAR83296.1"/>
    <property type="molecule type" value="Genomic_DNA"/>
</dbReference>
<dbReference type="EMBL" id="AY484968">
    <property type="protein sequence ID" value="AAR83296.1"/>
    <property type="status" value="JOINED"/>
    <property type="molecule type" value="Genomic_DNA"/>
</dbReference>
<dbReference type="EMBL" id="AY484969">
    <property type="protein sequence ID" value="AAR83296.1"/>
    <property type="status" value="JOINED"/>
    <property type="molecule type" value="Genomic_DNA"/>
</dbReference>
<dbReference type="EMBL" id="AY484970">
    <property type="protein sequence ID" value="AAR83296.1"/>
    <property type="status" value="JOINED"/>
    <property type="molecule type" value="Genomic_DNA"/>
</dbReference>
<dbReference type="EMBL" id="AY484971">
    <property type="protein sequence ID" value="AAR83297.1"/>
    <property type="molecule type" value="Genomic_DNA"/>
</dbReference>
<dbReference type="EMBL" id="AY484968">
    <property type="protein sequence ID" value="AAR83297.1"/>
    <property type="status" value="JOINED"/>
    <property type="molecule type" value="Genomic_DNA"/>
</dbReference>
<dbReference type="EMBL" id="AY484969">
    <property type="protein sequence ID" value="AAR83297.1"/>
    <property type="status" value="JOINED"/>
    <property type="molecule type" value="Genomic_DNA"/>
</dbReference>
<dbReference type="EMBL" id="AY484970">
    <property type="protein sequence ID" value="AAR83297.1"/>
    <property type="status" value="JOINED"/>
    <property type="molecule type" value="Genomic_DNA"/>
</dbReference>
<dbReference type="EMBL" id="AY484971">
    <property type="protein sequence ID" value="AAR83298.1"/>
    <property type="molecule type" value="Genomic_DNA"/>
</dbReference>
<dbReference type="EMBL" id="AY484967">
    <property type="protein sequence ID" value="AAR83298.1"/>
    <property type="status" value="JOINED"/>
    <property type="molecule type" value="Genomic_DNA"/>
</dbReference>
<dbReference type="EMBL" id="AY484969">
    <property type="protein sequence ID" value="AAR83298.1"/>
    <property type="status" value="JOINED"/>
    <property type="molecule type" value="Genomic_DNA"/>
</dbReference>
<dbReference type="EMBL" id="AY484970">
    <property type="protein sequence ID" value="AAR83298.1"/>
    <property type="status" value="JOINED"/>
    <property type="molecule type" value="Genomic_DNA"/>
</dbReference>
<dbReference type="EMBL" id="AL163302">
    <property type="protein sequence ID" value="CAB90482.1"/>
    <property type="molecule type" value="Genomic_DNA"/>
</dbReference>
<dbReference type="EMBL" id="BX322561">
    <property type="status" value="NOT_ANNOTATED_CDS"/>
    <property type="molecule type" value="Genomic_DNA"/>
</dbReference>
<dbReference type="EMBL" id="BC033715">
    <property type="protein sequence ID" value="AAH33715.1"/>
    <property type="molecule type" value="mRNA"/>
</dbReference>
<dbReference type="EMBL" id="BC063833">
    <property type="protein sequence ID" value="AAH63833.1"/>
    <property type="molecule type" value="mRNA"/>
</dbReference>
<dbReference type="EMBL" id="L22548">
    <property type="protein sequence ID" value="AAA51864.1"/>
    <property type="molecule type" value="mRNA"/>
</dbReference>
<dbReference type="EMBL" id="AF416592">
    <property type="protein sequence ID" value="AAL37720.1"/>
    <property type="molecule type" value="mRNA"/>
</dbReference>
<dbReference type="EMBL" id="AF184060">
    <property type="protein sequence ID" value="AAF01310.1"/>
    <property type="molecule type" value="mRNA"/>
</dbReference>
<dbReference type="EMBL" id="AF333247">
    <property type="protein sequence ID" value="AAK50626.1"/>
    <property type="molecule type" value="mRNA"/>
</dbReference>
<dbReference type="CCDS" id="CCDS42971.1">
    <molecule id="P39060-2"/>
</dbReference>
<dbReference type="RefSeq" id="NP_001366429.1">
    <molecule id="P39060-2"/>
    <property type="nucleotide sequence ID" value="NM_001379500.1"/>
</dbReference>
<dbReference type="RefSeq" id="NP_085059.2">
    <property type="nucleotide sequence ID" value="NM_030582.3"/>
</dbReference>
<dbReference type="RefSeq" id="NP_569711.2">
    <property type="nucleotide sequence ID" value="NM_130444.2"/>
</dbReference>
<dbReference type="RefSeq" id="NP_569712.2">
    <property type="nucleotide sequence ID" value="NM_130445.3"/>
</dbReference>
<dbReference type="PDB" id="1BNL">
    <property type="method" value="X-ray"/>
    <property type="resolution" value="2.90 A"/>
    <property type="chains" value="A/B/C/D=1572-1749"/>
</dbReference>
<dbReference type="PDB" id="3HON">
    <property type="method" value="X-ray"/>
    <property type="resolution" value="3.00 A"/>
    <property type="chains" value="A=1441-1496"/>
</dbReference>
<dbReference type="PDB" id="3HSH">
    <property type="method" value="X-ray"/>
    <property type="resolution" value="1.80 A"/>
    <property type="chains" value="A/B/C/D/E/F=1441-1496"/>
</dbReference>
<dbReference type="PDBsum" id="1BNL"/>
<dbReference type="PDBsum" id="3HON"/>
<dbReference type="PDBsum" id="3HSH"/>
<dbReference type="SMR" id="P39060"/>
<dbReference type="BioGRID" id="123311">
    <property type="interactions" value="133"/>
</dbReference>
<dbReference type="ComplexPortal" id="CPX-1759">
    <property type="entry name" value="Collagen type XVIII trimer"/>
</dbReference>
<dbReference type="CORUM" id="P39060"/>
<dbReference type="FunCoup" id="P39060">
    <property type="interactions" value="458"/>
</dbReference>
<dbReference type="IntAct" id="P39060">
    <property type="interactions" value="66"/>
</dbReference>
<dbReference type="MINT" id="P39060"/>
<dbReference type="STRING" id="9606.ENSP00000352798"/>
<dbReference type="ChEMBL" id="CHEMBL2364188"/>
<dbReference type="GlyConnect" id="127">
    <property type="glycosylation" value="1 N-Linked glycan (1 site), 1 O-Linked glycan (1 site)"/>
</dbReference>
<dbReference type="GlyCosmos" id="P39060">
    <property type="glycosylation" value="29 sites, 10 glycans"/>
</dbReference>
<dbReference type="GlyGen" id="P39060">
    <property type="glycosylation" value="34 sites, 11 N-linked glycans (2 sites), 10 O-linked glycans (27 sites)"/>
</dbReference>
<dbReference type="iPTMnet" id="P39060"/>
<dbReference type="PhosphoSitePlus" id="P39060"/>
<dbReference type="BioMuta" id="COL18A1"/>
<dbReference type="DMDM" id="215274264"/>
<dbReference type="jPOST" id="P39060"/>
<dbReference type="MassIVE" id="P39060"/>
<dbReference type="PeptideAtlas" id="P39060"/>
<dbReference type="ProteomicsDB" id="55311">
    <molecule id="P39060-3"/>
</dbReference>
<dbReference type="ProteomicsDB" id="55312">
    <molecule id="P39060-1"/>
</dbReference>
<dbReference type="ProteomicsDB" id="55313">
    <molecule id="P39060-2"/>
</dbReference>
<dbReference type="Pumba" id="P39060"/>
<dbReference type="Antibodypedia" id="2814">
    <property type="antibodies" value="606 antibodies from 37 providers"/>
</dbReference>
<dbReference type="DNASU" id="80781"/>
<dbReference type="Ensembl" id="ENST00000355480.10">
    <molecule id="P39060-1"/>
    <property type="protein sequence ID" value="ENSP00000347665.5"/>
    <property type="gene ID" value="ENSG00000182871.16"/>
</dbReference>
<dbReference type="Ensembl" id="ENST00000359759.8">
    <molecule id="P39060-3"/>
    <property type="protein sequence ID" value="ENSP00000352798.4"/>
    <property type="gene ID" value="ENSG00000182871.16"/>
</dbReference>
<dbReference type="Ensembl" id="ENST00000651438.1">
    <molecule id="P39060-2"/>
    <property type="protein sequence ID" value="ENSP00000498485.1"/>
    <property type="gene ID" value="ENSG00000182871.16"/>
</dbReference>
<dbReference type="GeneID" id="80781"/>
<dbReference type="KEGG" id="hsa:80781"/>
<dbReference type="MANE-Select" id="ENST00000651438.1">
    <molecule id="P39060-2"/>
    <property type="protein sequence ID" value="ENSP00000498485.1"/>
    <property type="RefSeq nucleotide sequence ID" value="NM_001379500.1"/>
    <property type="RefSeq protein sequence ID" value="NP_001366429.1"/>
</dbReference>
<dbReference type="UCSC" id="uc062awf.1">
    <molecule id="P39060-3"/>
    <property type="organism name" value="human"/>
</dbReference>
<dbReference type="AGR" id="HGNC:2195"/>
<dbReference type="CTD" id="80781"/>
<dbReference type="DisGeNET" id="80781"/>
<dbReference type="GeneCards" id="COL18A1"/>
<dbReference type="HGNC" id="HGNC:2195">
    <property type="gene designation" value="COL18A1"/>
</dbReference>
<dbReference type="HPA" id="ENSG00000182871">
    <property type="expression patterns" value="Tissue enhanced (liver)"/>
</dbReference>
<dbReference type="MalaCards" id="COL18A1"/>
<dbReference type="MIM" id="120328">
    <property type="type" value="gene"/>
</dbReference>
<dbReference type="MIM" id="267750">
    <property type="type" value="phenotype"/>
</dbReference>
<dbReference type="MIM" id="618880">
    <property type="type" value="phenotype"/>
</dbReference>
<dbReference type="neXtProt" id="NX_P39060"/>
<dbReference type="OpenTargets" id="ENSG00000182871"/>
<dbReference type="Orphanet" id="1571">
    <property type="disease" value="Knobloch syndrome"/>
</dbReference>
<dbReference type="PharmGKB" id="PA26711"/>
<dbReference type="VEuPathDB" id="HostDB:ENSG00000182871"/>
<dbReference type="eggNOG" id="KOG3546">
    <property type="taxonomic scope" value="Eukaryota"/>
</dbReference>
<dbReference type="GeneTree" id="ENSGT00940000158212"/>
<dbReference type="HOGENOM" id="CLU_004003_1_0_1"/>
<dbReference type="InParanoid" id="P39060"/>
<dbReference type="OMA" id="VQDQHQN"/>
<dbReference type="OrthoDB" id="5983381at2759"/>
<dbReference type="PAN-GO" id="P39060">
    <property type="GO annotations" value="6 GO annotations based on evolutionary models"/>
</dbReference>
<dbReference type="PhylomeDB" id="P39060"/>
<dbReference type="TreeFam" id="TF315821"/>
<dbReference type="PathwayCommons" id="P39060"/>
<dbReference type="Reactome" id="R-HSA-1442490">
    <property type="pathway name" value="Collagen degradation"/>
</dbReference>
<dbReference type="Reactome" id="R-HSA-1592389">
    <property type="pathway name" value="Activation of Matrix Metalloproteinases"/>
</dbReference>
<dbReference type="Reactome" id="R-HSA-1650814">
    <property type="pathway name" value="Collagen biosynthesis and modifying enzymes"/>
</dbReference>
<dbReference type="Reactome" id="R-HSA-2022090">
    <property type="pathway name" value="Assembly of collagen fibrils and other multimeric structures"/>
</dbReference>
<dbReference type="Reactome" id="R-HSA-216083">
    <property type="pathway name" value="Integrin cell surface interactions"/>
</dbReference>
<dbReference type="Reactome" id="R-HSA-3000157">
    <property type="pathway name" value="Laminin interactions"/>
</dbReference>
<dbReference type="Reactome" id="R-HSA-8948216">
    <property type="pathway name" value="Collagen chain trimerization"/>
</dbReference>
<dbReference type="SignaLink" id="P39060"/>
<dbReference type="SIGNOR" id="P39060"/>
<dbReference type="BioGRID-ORCS" id="80781">
    <property type="hits" value="6 hits in 1154 CRISPR screens"/>
</dbReference>
<dbReference type="ChiTaRS" id="COL18A1">
    <property type="organism name" value="human"/>
</dbReference>
<dbReference type="EvolutionaryTrace" id="P39060"/>
<dbReference type="GeneWiki" id="Collagen,_type_XVIII,_alpha_1"/>
<dbReference type="GenomeRNAi" id="80781"/>
<dbReference type="Pharos" id="P39060">
    <property type="development level" value="Tbio"/>
</dbReference>
<dbReference type="PRO" id="PR:P39060"/>
<dbReference type="Proteomes" id="UP000005640">
    <property type="component" value="Chromosome 21"/>
</dbReference>
<dbReference type="RNAct" id="P39060">
    <property type="molecule type" value="protein"/>
</dbReference>
<dbReference type="Bgee" id="ENSG00000182871">
    <property type="expression patterns" value="Expressed in right coronary artery and 189 other cell types or tissues"/>
</dbReference>
<dbReference type="ExpressionAtlas" id="P39060">
    <property type="expression patterns" value="baseline and differential"/>
</dbReference>
<dbReference type="GO" id="GO:0005604">
    <property type="term" value="C:basement membrane"/>
    <property type="evidence" value="ECO:0007669"/>
    <property type="project" value="UniProtKB-SubCell"/>
</dbReference>
<dbReference type="GO" id="GO:0005581">
    <property type="term" value="C:collagen trimer"/>
    <property type="evidence" value="ECO:0000318"/>
    <property type="project" value="GO_Central"/>
</dbReference>
<dbReference type="GO" id="GO:0062023">
    <property type="term" value="C:collagen-containing extracellular matrix"/>
    <property type="evidence" value="ECO:0007005"/>
    <property type="project" value="UniProtKB"/>
</dbReference>
<dbReference type="GO" id="GO:0005788">
    <property type="term" value="C:endoplasmic reticulum lumen"/>
    <property type="evidence" value="ECO:0000304"/>
    <property type="project" value="Reactome"/>
</dbReference>
<dbReference type="GO" id="GO:0070062">
    <property type="term" value="C:extracellular exosome"/>
    <property type="evidence" value="ECO:0007005"/>
    <property type="project" value="UniProtKB"/>
</dbReference>
<dbReference type="GO" id="GO:0005576">
    <property type="term" value="C:extracellular region"/>
    <property type="evidence" value="ECO:0007005"/>
    <property type="project" value="BHF-UCL"/>
</dbReference>
<dbReference type="GO" id="GO:0005615">
    <property type="term" value="C:extracellular space"/>
    <property type="evidence" value="ECO:0007005"/>
    <property type="project" value="BHF-UCL"/>
</dbReference>
<dbReference type="GO" id="GO:0030020">
    <property type="term" value="F:extracellular matrix structural constituent conferring tensile strength"/>
    <property type="evidence" value="ECO:0000318"/>
    <property type="project" value="GO_Central"/>
</dbReference>
<dbReference type="GO" id="GO:0046872">
    <property type="term" value="F:metal ion binding"/>
    <property type="evidence" value="ECO:0007669"/>
    <property type="project" value="UniProtKB-KW"/>
</dbReference>
<dbReference type="GO" id="GO:0001525">
    <property type="term" value="P:angiogenesis"/>
    <property type="evidence" value="ECO:0000318"/>
    <property type="project" value="GO_Central"/>
</dbReference>
<dbReference type="GO" id="GO:0009887">
    <property type="term" value="P:animal organ morphogenesis"/>
    <property type="evidence" value="ECO:0000304"/>
    <property type="project" value="ProtInc"/>
</dbReference>
<dbReference type="GO" id="GO:0007155">
    <property type="term" value="P:cell adhesion"/>
    <property type="evidence" value="ECO:0007669"/>
    <property type="project" value="UniProtKB-KW"/>
</dbReference>
<dbReference type="GO" id="GO:0001886">
    <property type="term" value="P:endothelial cell morphogenesis"/>
    <property type="evidence" value="ECO:0000318"/>
    <property type="project" value="GO_Central"/>
</dbReference>
<dbReference type="GO" id="GO:0008285">
    <property type="term" value="P:negative regulation of cell population proliferation"/>
    <property type="evidence" value="ECO:0000304"/>
    <property type="project" value="ProtInc"/>
</dbReference>
<dbReference type="GO" id="GO:0051599">
    <property type="term" value="P:response to hydrostatic pressure"/>
    <property type="evidence" value="ECO:0007669"/>
    <property type="project" value="Ensembl"/>
</dbReference>
<dbReference type="GO" id="GO:0009410">
    <property type="term" value="P:response to xenobiotic stimulus"/>
    <property type="evidence" value="ECO:0007669"/>
    <property type="project" value="Ensembl"/>
</dbReference>
<dbReference type="GO" id="GO:0001501">
    <property type="term" value="P:skeletal system development"/>
    <property type="evidence" value="ECO:0000318"/>
    <property type="project" value="GO_Central"/>
</dbReference>
<dbReference type="GO" id="GO:0007601">
    <property type="term" value="P:visual perception"/>
    <property type="evidence" value="ECO:0000304"/>
    <property type="project" value="ProtInc"/>
</dbReference>
<dbReference type="CDD" id="cd07455">
    <property type="entry name" value="CRD_Collagen_XVIII"/>
    <property type="match status" value="1"/>
</dbReference>
<dbReference type="CDD" id="cd00247">
    <property type="entry name" value="Endostatin-like"/>
    <property type="match status" value="1"/>
</dbReference>
<dbReference type="FunFam" id="1.10.2000.10:FF:000017">
    <property type="entry name" value="Alpha 1 type XVIII collagen"/>
    <property type="match status" value="1"/>
</dbReference>
<dbReference type="FunFam" id="3.10.100.10:FF:000008">
    <property type="entry name" value="collagen alpha-1(XVIII) chain isoform X1"/>
    <property type="match status" value="1"/>
</dbReference>
<dbReference type="FunFam" id="3.40.1620.70:FF:000003">
    <property type="entry name" value="Collagen type XVIII alpha 1"/>
    <property type="match status" value="1"/>
</dbReference>
<dbReference type="FunFam" id="2.60.120.200:FF:000039">
    <property type="entry name" value="Collagen XV alpha 1 chain"/>
    <property type="match status" value="1"/>
</dbReference>
<dbReference type="Gene3D" id="2.60.120.200">
    <property type="match status" value="1"/>
</dbReference>
<dbReference type="Gene3D" id="3.40.1620.70">
    <property type="match status" value="1"/>
</dbReference>
<dbReference type="Gene3D" id="1.10.2000.10">
    <property type="entry name" value="Frizzled cysteine-rich domain"/>
    <property type="match status" value="1"/>
</dbReference>
<dbReference type="Gene3D" id="3.10.100.10">
    <property type="entry name" value="Mannose-Binding Protein A, subunit A"/>
    <property type="match status" value="1"/>
</dbReference>
<dbReference type="InterPro" id="IPR016186">
    <property type="entry name" value="C-type_lectin-like/link_sf"/>
</dbReference>
<dbReference type="InterPro" id="IPR008160">
    <property type="entry name" value="Collagen"/>
</dbReference>
<dbReference type="InterPro" id="IPR050149">
    <property type="entry name" value="Collagen_superfamily"/>
</dbReference>
<dbReference type="InterPro" id="IPR035523">
    <property type="entry name" value="Collagen_XVIII_Fz"/>
</dbReference>
<dbReference type="InterPro" id="IPR010515">
    <property type="entry name" value="Collagenase_NC10/endostatin"/>
</dbReference>
<dbReference type="InterPro" id="IPR013320">
    <property type="entry name" value="ConA-like_dom_sf"/>
</dbReference>
<dbReference type="InterPro" id="IPR016187">
    <property type="entry name" value="CTDL_fold"/>
</dbReference>
<dbReference type="InterPro" id="IPR010363">
    <property type="entry name" value="DUF959_COL18_N"/>
</dbReference>
<dbReference type="InterPro" id="IPR020067">
    <property type="entry name" value="Frizzled_dom"/>
</dbReference>
<dbReference type="InterPro" id="IPR036790">
    <property type="entry name" value="Frizzled_dom_sf"/>
</dbReference>
<dbReference type="InterPro" id="IPR048287">
    <property type="entry name" value="TSPN-like_N"/>
</dbReference>
<dbReference type="InterPro" id="IPR045463">
    <property type="entry name" value="XV/XVIII_trimerization_dom"/>
</dbReference>
<dbReference type="PANTHER" id="PTHR24023:SF1090">
    <property type="entry name" value="ALPHA2(IV)-LIKE COLLAGEN"/>
    <property type="match status" value="1"/>
</dbReference>
<dbReference type="PANTHER" id="PTHR24023">
    <property type="entry name" value="COLLAGEN ALPHA"/>
    <property type="match status" value="1"/>
</dbReference>
<dbReference type="Pfam" id="PF01391">
    <property type="entry name" value="Collagen"/>
    <property type="match status" value="3"/>
</dbReference>
<dbReference type="Pfam" id="PF20010">
    <property type="entry name" value="Collagen_trimer"/>
    <property type="match status" value="1"/>
</dbReference>
<dbReference type="Pfam" id="PF06121">
    <property type="entry name" value="DUF959"/>
    <property type="match status" value="1"/>
</dbReference>
<dbReference type="Pfam" id="PF06482">
    <property type="entry name" value="Endostatin"/>
    <property type="match status" value="1"/>
</dbReference>
<dbReference type="Pfam" id="PF01392">
    <property type="entry name" value="Fz"/>
    <property type="match status" value="1"/>
</dbReference>
<dbReference type="SMART" id="SM00063">
    <property type="entry name" value="FRI"/>
    <property type="match status" value="1"/>
</dbReference>
<dbReference type="SMART" id="SM00210">
    <property type="entry name" value="TSPN"/>
    <property type="match status" value="1"/>
</dbReference>
<dbReference type="SUPFAM" id="SSF56436">
    <property type="entry name" value="C-type lectin-like"/>
    <property type="match status" value="1"/>
</dbReference>
<dbReference type="SUPFAM" id="SSF49899">
    <property type="entry name" value="Concanavalin A-like lectins/glucanases"/>
    <property type="match status" value="1"/>
</dbReference>
<dbReference type="SUPFAM" id="SSF63501">
    <property type="entry name" value="Frizzled cysteine-rich domain"/>
    <property type="match status" value="1"/>
</dbReference>
<dbReference type="PROSITE" id="PS50038">
    <property type="entry name" value="FZ"/>
    <property type="match status" value="1"/>
</dbReference>
<reference key="1">
    <citation type="journal article" date="1998" name="Matrix Biol.">
        <title>Complete primary structure of two variant forms of human type XVIII collagen and tissue-specific differences in the expression of the corresponding transcripts.</title>
        <authorList>
            <person name="Saarela J."/>
            <person name="Ylikarppa R."/>
            <person name="Rehn M."/>
            <person name="Purmonen S."/>
            <person name="Pihlajaniemi T."/>
        </authorList>
    </citation>
    <scope>NUCLEOTIDE SEQUENCE [MRNA] (ISOFORMS 2 AND 3)</scope>
    <scope>VARIANT ILE-1076</scope>
</reference>
<reference key="2">
    <citation type="journal article" date="2003" name="Matrix Biol.">
        <title>Characterization of the human type XVIII collagen gene and proteolytic processing and tissue location of the variant containing a frizzled motif.</title>
        <authorList>
            <person name="Elamaa H."/>
            <person name="Snellman A."/>
            <person name="Rehn M."/>
            <person name="Autio-Harmainen H."/>
            <person name="Pihlajaniemi T."/>
        </authorList>
    </citation>
    <scope>NUCLEOTIDE SEQUENCE [GENOMIC DNA] (ISOFORMS 1; 2 AND 3)</scope>
    <scope>VARIANTS ILE-1076 AND ASN-1675</scope>
</reference>
<reference key="3">
    <citation type="journal article" date="2000" name="Nature">
        <title>The DNA sequence of human chromosome 21.</title>
        <authorList>
            <person name="Hattori M."/>
            <person name="Fujiyama A."/>
            <person name="Taylor T.D."/>
            <person name="Watanabe H."/>
            <person name="Yada T."/>
            <person name="Park H.-S."/>
            <person name="Toyoda A."/>
            <person name="Ishii K."/>
            <person name="Totoki Y."/>
            <person name="Choi D.-K."/>
            <person name="Groner Y."/>
            <person name="Soeda E."/>
            <person name="Ohki M."/>
            <person name="Takagi T."/>
            <person name="Sakaki Y."/>
            <person name="Taudien S."/>
            <person name="Blechschmidt K."/>
            <person name="Polley A."/>
            <person name="Menzel U."/>
            <person name="Delabar J."/>
            <person name="Kumpf K."/>
            <person name="Lehmann R."/>
            <person name="Patterson D."/>
            <person name="Reichwald K."/>
            <person name="Rump A."/>
            <person name="Schillhabel M."/>
            <person name="Schudy A."/>
            <person name="Zimmermann W."/>
            <person name="Rosenthal A."/>
            <person name="Kudoh J."/>
            <person name="Shibuya K."/>
            <person name="Kawasaki K."/>
            <person name="Asakawa S."/>
            <person name="Shintani A."/>
            <person name="Sasaki T."/>
            <person name="Nagamine K."/>
            <person name="Mitsuyama S."/>
            <person name="Antonarakis S.E."/>
            <person name="Minoshima S."/>
            <person name="Shimizu N."/>
            <person name="Nordsiek G."/>
            <person name="Hornischer K."/>
            <person name="Brandt P."/>
            <person name="Scharfe M."/>
            <person name="Schoen O."/>
            <person name="Desario A."/>
            <person name="Reichelt J."/>
            <person name="Kauer G."/>
            <person name="Bloecker H."/>
            <person name="Ramser J."/>
            <person name="Beck A."/>
            <person name="Klages S."/>
            <person name="Hennig S."/>
            <person name="Riesselmann L."/>
            <person name="Dagand E."/>
            <person name="Wehrmeyer S."/>
            <person name="Borzym K."/>
            <person name="Gardiner K."/>
            <person name="Nizetic D."/>
            <person name="Francis F."/>
            <person name="Lehrach H."/>
            <person name="Reinhardt R."/>
            <person name="Yaspo M.-L."/>
        </authorList>
    </citation>
    <scope>NUCLEOTIDE SEQUENCE [LARGE SCALE GENOMIC DNA]</scope>
</reference>
<reference key="4">
    <citation type="journal article" date="2004" name="Genome Res.">
        <title>The status, quality, and expansion of the NIH full-length cDNA project: the Mammalian Gene Collection (MGC).</title>
        <authorList>
            <consortium name="The MGC Project Team"/>
        </authorList>
    </citation>
    <scope>NUCLEOTIDE SEQUENCE [LARGE SCALE MRNA] (ISOFORM 3)</scope>
    <scope>VARIANT ILE-1076</scope>
    <source>
        <tissue>Kidney</tissue>
        <tissue>PNS</tissue>
    </source>
</reference>
<reference key="5">
    <citation type="journal article" date="1994" name="Genomics">
        <title>Cloning of cDNA and genomic DNA encoding human type XVIII collagen and localization of the alpha 1(XVIII) collagen gene to mouse chromosome 10 and human chromosome 21.</title>
        <authorList>
            <person name="Oh S.P."/>
            <person name="Warman M.L."/>
            <person name="Seldin M.F."/>
            <person name="Cheng S."/>
            <person name="Knoll J.H."/>
            <person name="Timmons S."/>
            <person name="Olsen B.R."/>
        </authorList>
    </citation>
    <scope>NUCLEOTIDE SEQUENCE [MRNA] OF 1069-1754</scope>
    <scope>VARIANT ARG-1121</scope>
</reference>
<reference key="6">
    <citation type="journal article" date="2001" name="Sheng Wu Gong Cheng Xue Bao">
        <title>Inhibition effect in vitro of purified endostatin expressed in Pichia pastoris.</title>
        <authorList>
            <person name="Feng Y."/>
            <person name="Cui L.B."/>
            <person name="Liu C.X."/>
            <person name="Ma Q.J."/>
        </authorList>
    </citation>
    <scope>NUCLEOTIDE SEQUENCE [MRNA] OF 1568-1754</scope>
</reference>
<reference key="7">
    <citation type="submission" date="1999-09" db="EMBL/GenBank/DDBJ databases">
        <title>Cloning and expression of human endostatin gene in Escherichia coli.</title>
        <authorList>
            <person name="Zhi-Yong H."/>
            <person name="Biao L."/>
            <person name="Wei-Jie Z."/>
            <person name="Xiang-Fu W."/>
        </authorList>
    </citation>
    <scope>NUCLEOTIDE SEQUENCE [MRNA] OF 1572-1754</scope>
    <scope>VARIANT ASN-1675</scope>
    <source>
        <tissue>Placenta</tissue>
    </source>
</reference>
<reference key="8">
    <citation type="submission" date="2001-01" db="EMBL/GenBank/DDBJ databases">
        <title>Endostatin promotes delayed secondary damage following traumatic brain injury.</title>
        <authorList>
            <person name="Deininger M.H."/>
            <person name="Trautmann K."/>
            <person name="Schluesener H.J."/>
        </authorList>
    </citation>
    <scope>NUCLEOTIDE SEQUENCE [MRNA] OF 1642-1743</scope>
</reference>
<reference key="9">
    <citation type="journal article" date="1997" name="FEBS Lett.">
        <title>Isolation and characterization of the circulating form of human endostatin.</title>
        <authorList>
            <person name="Staendker L."/>
            <person name="Schrader M."/>
            <person name="Kanse S.M."/>
            <person name="Juergens M."/>
            <person name="Forssmann W.G."/>
            <person name="Preissner K.T."/>
        </authorList>
    </citation>
    <scope>FUNCTION</scope>
</reference>
<reference key="10">
    <citation type="journal article" date="1999" name="Biochemistry">
        <title>Novel glycosylated forms of human plasma endostatin and circulating endostatin-related fragments of collagen XV.</title>
        <authorList>
            <person name="John H."/>
            <person name="Preissner K.T."/>
            <person name="Forssmann W.G."/>
            <person name="Staendker L."/>
        </authorList>
    </citation>
    <scope>GLYCOSYLATION AT THR-1567</scope>
    <scope>GLYCOSYLATION</scope>
    <scope>SUBCELLULAR LOCATION</scope>
</reference>
<reference key="11">
    <citation type="journal article" date="1999" name="Cancer Res.">
        <title>The generation of endostatin is mediated by elastase.</title>
        <authorList>
            <person name="Wen W."/>
            <person name="Moses M.A."/>
            <person name="Wiederschain D."/>
            <person name="Arbiser J.L."/>
            <person name="Folkman J."/>
        </authorList>
    </citation>
    <scope>PROTEOLYTIC CLEAVAGE</scope>
</reference>
<reference key="12">
    <citation type="journal article" date="2001" name="J. Cell Biol.">
        <title>Oligomerization-dependent regulation of motility and morphogenesis by the collagen XVIII NC1/endostatin domain.</title>
        <authorList>
            <person name="Kuo C.J."/>
            <person name="LaMontagne K.R. Jr."/>
            <person name="Garcia-Cardena G."/>
            <person name="Ackley B.D."/>
            <person name="Kalman D."/>
            <person name="Park S."/>
            <person name="Christofferson R."/>
            <person name="Kamihara J."/>
            <person name="Ding Y.H."/>
            <person name="Lo K.M."/>
            <person name="Gillies S."/>
            <person name="Folkman J."/>
            <person name="Mulligan R.C."/>
            <person name="Javaherian K."/>
        </authorList>
    </citation>
    <scope>FUNCTION</scope>
    <scope>SUBUNIT</scope>
</reference>
<reference key="13">
    <citation type="journal article" date="2007" name="Biochem. Biophys. Res. Commun.">
        <title>Endostar, a novel recombinant human endostatin, exerts antiangiogenic effect via blocking VEGF-induced tyrosine phosphorylation of KDR/Flk-1 of endothelial cells.</title>
        <authorList>
            <person name="Ling Y."/>
            <person name="Yang Y."/>
            <person name="Lu N."/>
            <person name="You Q.D."/>
            <person name="Wang S."/>
            <person name="Gao Y."/>
            <person name="Chen Y."/>
            <person name="Guo Q.L."/>
        </authorList>
    </citation>
    <scope>BIOTECHNOLOGY</scope>
</reference>
<reference key="14">
    <citation type="journal article" date="2013" name="J. Med. Genet.">
        <title>No evidence for locus heterogeneity in Knobloch syndrome.</title>
        <authorList>
            <person name="Aldahmesh M.A."/>
            <person name="Khan A.O."/>
            <person name="Mohamed J.Y."/>
            <person name="Levin A.V."/>
            <person name="Wuthisiri W."/>
            <person name="Lynch S."/>
            <person name="McCreery K."/>
            <person name="Alkuraya F.S."/>
        </authorList>
    </citation>
    <scope>INVOLVEMENT IN KNO1</scope>
</reference>
<reference key="15">
    <citation type="journal article" date="2014" name="J. Proteomics">
        <title>An enzyme assisted RP-RPLC approach for in-depth analysis of human liver phosphoproteome.</title>
        <authorList>
            <person name="Bian Y."/>
            <person name="Song C."/>
            <person name="Cheng K."/>
            <person name="Dong M."/>
            <person name="Wang F."/>
            <person name="Huang J."/>
            <person name="Sun D."/>
            <person name="Wang L."/>
            <person name="Ye M."/>
            <person name="Zou H."/>
        </authorList>
    </citation>
    <scope>PHOSPHORYLATION [LARGE SCALE ANALYSIS] AT THR-696</scope>
    <scope>IDENTIFICATION BY MASS SPECTROMETRY [LARGE SCALE ANALYSIS]</scope>
    <source>
        <tissue>Liver</tissue>
    </source>
</reference>
<reference key="16">
    <citation type="journal article" date="2020" name="Glycobiology">
        <title>An affinity chromatography and glycoproteomics workflow to profile the chondroitin sulfate proteoglycans that interact with malarial VAR2CSA in the placenta and in cancer.</title>
        <authorList>
            <person name="Toledo A.G."/>
            <person name="Pihl J."/>
            <person name="Spliid C.B."/>
            <person name="Persson A."/>
            <person name="Nilsson J."/>
            <person name="Pereira M.A."/>
            <person name="Gustavsson T."/>
            <person name="Choudhary S."/>
            <person name="Oo H.Z."/>
            <person name="Black P.C."/>
            <person name="Daugaard M."/>
            <person name="Esko J.D."/>
            <person name="Larson G."/>
            <person name="Salanti A."/>
            <person name="Clausen T.M."/>
        </authorList>
    </citation>
    <scope>TISSUE SPECIFICITY</scope>
    <scope>GLYCOSYLATION AT SER-889</scope>
</reference>
<reference key="17">
    <citation type="journal article" date="1998" name="Proc. Natl. Acad. Sci. U.S.A.">
        <title>Zinc-dependent dimers observed in crystals of human endostatin.</title>
        <authorList>
            <person name="Ding Y.-H."/>
            <person name="Javaherian K."/>
            <person name="Lo K.-M."/>
            <person name="Chopra R."/>
            <person name="Boehm T."/>
            <person name="Lanciotti J."/>
            <person name="Harris B.A."/>
            <person name="Li Y."/>
            <person name="Shapiro R."/>
            <person name="Hohenester E."/>
            <person name="Timpl R."/>
            <person name="Folkman J."/>
            <person name="Wiley D.C."/>
        </authorList>
    </citation>
    <scope>X-RAY CRYSTALLOGRAPHY (2.9 ANGSTROMS) OF 1572-1749</scope>
    <scope>ZINC-BINDING SITE</scope>
</reference>
<reference key="18">
    <citation type="journal article" date="2000" name="Hum. Mol. Genet.">
        <title>Collagen XVIII, containing an endogenous inhibitor of angiogenesis and tumor growth, plays a critical role in the maintenance of retinal structure and in neural tube closure.</title>
        <authorList>
            <person name="Sertie A.L."/>
            <person name="Sossi V."/>
            <person name="Camargo A.A."/>
            <person name="Zatz M."/>
            <person name="Brahe C."/>
            <person name="Passos-Bueno M.R."/>
        </authorList>
    </citation>
    <scope>INVOLVEMENT IN KNO1</scope>
    <scope>FUNCTION</scope>
</reference>
<reference key="19">
    <citation type="journal article" date="2001" name="Cancer Res.">
        <title>A polymorphism in endostatin, an angiogenesis inhibitor, predisposes for the development of prostatic adenocarcinoma.</title>
        <authorList>
            <person name="Iughetti P."/>
            <person name="Suzuki O."/>
            <person name="Godoi P.H."/>
            <person name="Alves V.A."/>
            <person name="Sertie A.L."/>
            <person name="Zorick T."/>
            <person name="Soares F."/>
            <person name="Camargo A.A."/>
            <person name="Moreira E.S."/>
            <person name="di Loreto C."/>
            <person name="Moreira-Filho C.A."/>
            <person name="Simpson A."/>
            <person name="Oliva G."/>
            <person name="Passos-Bueno M.R."/>
        </authorList>
    </citation>
    <scope>VARIANTS ILE-1076 AND ASN-1675</scope>
</reference>
<reference key="20">
    <citation type="journal article" date="2004" name="Hum. Mutat.">
        <title>Knobloch syndrome: novel mutations in COL18A1, evidence for genetic heterogeneity, and a functionally impaired polymorphism in endostatin.</title>
        <authorList>
            <person name="Menzel O."/>
            <person name="Bekkeheien R.C.J."/>
            <person name="Reymond A."/>
            <person name="Fukai N."/>
            <person name="Boye E."/>
            <person name="Kosztolanyi G."/>
            <person name="Aftimos S."/>
            <person name="Deutsch S."/>
            <person name="Scott H.S."/>
            <person name="Olsen B.R."/>
            <person name="Antonarakis S.E."/>
            <person name="Guipponi M."/>
        </authorList>
    </citation>
    <scope>VARIANTS LEU-49; ARG-111; ILE-1076 AND ARG-1121</scope>
    <scope>CHARACTERIZATION OF VARIANT ASN-1675</scope>
</reference>
<reference key="21">
    <citation type="journal article" date="2008" name="Nature">
        <title>DNA sequencing of a cytogenetically normal acute myeloid leukaemia genome.</title>
        <authorList>
            <person name="Ley T.J."/>
            <person name="Mardis E.R."/>
            <person name="Ding L."/>
            <person name="Fulton B."/>
            <person name="McLellan M.D."/>
            <person name="Chen K."/>
            <person name="Dooling D."/>
            <person name="Dunford-Shore B.H."/>
            <person name="McGrath S."/>
            <person name="Hickenbotham M."/>
            <person name="Cook L."/>
            <person name="Abbott R."/>
            <person name="Larson D.E."/>
            <person name="Koboldt D.C."/>
            <person name="Pohl C."/>
            <person name="Smith S."/>
            <person name="Hawkins A."/>
            <person name="Abbott S."/>
            <person name="Locke D."/>
            <person name="Hillier L.W."/>
            <person name="Miner T."/>
            <person name="Fulton L."/>
            <person name="Magrini V."/>
            <person name="Wylie T."/>
            <person name="Glasscock J."/>
            <person name="Conyers J."/>
            <person name="Sander N."/>
            <person name="Shi X."/>
            <person name="Osborne J.R."/>
            <person name="Minx P."/>
            <person name="Gordon D."/>
            <person name="Chinwalla A."/>
            <person name="Zhao Y."/>
            <person name="Ries R.E."/>
            <person name="Payton J.E."/>
            <person name="Westervelt P."/>
            <person name="Tomasson M.H."/>
            <person name="Watson M."/>
            <person name="Baty J."/>
            <person name="Ivanovich J."/>
            <person name="Heath S."/>
            <person name="Shannon W.D."/>
            <person name="Nagarajan R."/>
            <person name="Walter M.J."/>
            <person name="Link D.C."/>
            <person name="Graubert T.A."/>
            <person name="DiPersio J.F."/>
            <person name="Wilson R.K."/>
        </authorList>
    </citation>
    <scope>VARIANT [LARGE SCALE ANALYSIS] ARG-1121</scope>
</reference>
<reference key="22">
    <citation type="journal article" date="2018" name="Hum. Mol. Genet.">
        <title>COL18A1 is a candidate eye iridocorneal angle-closure gene in humans.</title>
        <authorList>
            <person name="Suri F."/>
            <person name="Yazdani S."/>
            <person name="Chapi M."/>
            <person name="Safari I."/>
            <person name="Rasooli P."/>
            <person name="Daftarian N."/>
            <person name="Jafarinasab M.R."/>
            <person name="Ghasemi Firouzabadi S."/>
            <person name="Alehabib E."/>
            <person name="Darvish H."/>
            <person name="Klotzle B."/>
            <person name="Fan J.B."/>
            <person name="Turk C."/>
            <person name="Elahi E."/>
        </authorList>
    </citation>
    <scope>INVOLVEMENT IN GLCC</scope>
    <scope>VARIANT GLCC LYS-184</scope>
</reference>
<accession>P39060</accession>
<accession>A8MVI4</accession>
<accession>Q58EX6</accession>
<accession>Q6RZ39</accession>
<accession>Q6RZ40</accession>
<accession>Q6RZ41</accession>
<accession>Q8N4S4</accession>
<accession>Q8WXI5</accession>
<accession>Q96T70</accession>
<accession>Q9UK38</accession>
<accession>Q9Y6Q7</accession>
<accession>Q9Y6Q8</accession>
<keyword id="KW-0002">3D-structure</keyword>
<keyword id="KW-0877">Alternative promoter usage</keyword>
<keyword id="KW-0025">Alternative splicing</keyword>
<keyword id="KW-0084">Basement membrane</keyword>
<keyword id="KW-0130">Cell adhesion</keyword>
<keyword id="KW-0176">Collagen</keyword>
<keyword id="KW-1015">Disulfide bond</keyword>
<keyword id="KW-0272">Extracellular matrix</keyword>
<keyword id="KW-0955">Glaucoma</keyword>
<keyword id="KW-0325">Glycoprotein</keyword>
<keyword id="KW-0379">Hydroxylation</keyword>
<keyword id="KW-0479">Metal-binding</keyword>
<keyword id="KW-0597">Phosphoprotein</keyword>
<keyword id="KW-0654">Proteoglycan</keyword>
<keyword id="KW-1267">Proteomics identification</keyword>
<keyword id="KW-1185">Reference proteome</keyword>
<keyword id="KW-0677">Repeat</keyword>
<keyword id="KW-0964">Secreted</keyword>
<keyword id="KW-0732">Signal</keyword>
<keyword id="KW-0862">Zinc</keyword>